<gene>
    <name evidence="1" type="primary">rpmB</name>
    <name type="ordered locus">WD_0391</name>
</gene>
<sequence>MSRVCELTNRKKSFGNKVSHSNRKTKRTFLLNLHKVTLTSDILNKKFRFRVATRTLRTIDYKGDLDAFLLNTRTIKLSEKAQKIKRRLKKVLVKQEVELAVSDA</sequence>
<proteinExistence type="inferred from homology"/>
<comment type="similarity">
    <text evidence="1">Belongs to the bacterial ribosomal protein bL28 family.</text>
</comment>
<organism>
    <name type="scientific">Wolbachia pipientis wMel</name>
    <dbReference type="NCBI Taxonomy" id="163164"/>
    <lineage>
        <taxon>Bacteria</taxon>
        <taxon>Pseudomonadati</taxon>
        <taxon>Pseudomonadota</taxon>
        <taxon>Alphaproteobacteria</taxon>
        <taxon>Rickettsiales</taxon>
        <taxon>Anaplasmataceae</taxon>
        <taxon>Wolbachieae</taxon>
        <taxon>Wolbachia</taxon>
    </lineage>
</organism>
<accession>Q73HZ5</accession>
<reference key="1">
    <citation type="journal article" date="2004" name="PLoS Biol.">
        <title>Phylogenomics of the reproductive parasite Wolbachia pipientis wMel: a streamlined genome overrun by mobile genetic elements.</title>
        <authorList>
            <person name="Wu M."/>
            <person name="Sun L.V."/>
            <person name="Vamathevan J.J."/>
            <person name="Riegler M."/>
            <person name="DeBoy R.T."/>
            <person name="Brownlie J.C."/>
            <person name="McGraw E.A."/>
            <person name="Martin W."/>
            <person name="Esser C."/>
            <person name="Ahmadinejad N."/>
            <person name="Wiegand C."/>
            <person name="Madupu R."/>
            <person name="Beanan M.J."/>
            <person name="Brinkac L.M."/>
            <person name="Daugherty S.C."/>
            <person name="Durkin A.S."/>
            <person name="Kolonay J.F."/>
            <person name="Nelson W.C."/>
            <person name="Mohamoud Y."/>
            <person name="Lee P."/>
            <person name="Berry K.J."/>
            <person name="Young M.B."/>
            <person name="Utterback T.R."/>
            <person name="Weidman J.F."/>
            <person name="Nierman W.C."/>
            <person name="Paulsen I.T."/>
            <person name="Nelson K.E."/>
            <person name="Tettelin H."/>
            <person name="O'Neill S.L."/>
            <person name="Eisen J.A."/>
        </authorList>
    </citation>
    <scope>NUCLEOTIDE SEQUENCE [LARGE SCALE GENOMIC DNA]</scope>
</reference>
<keyword id="KW-0687">Ribonucleoprotein</keyword>
<keyword id="KW-0689">Ribosomal protein</keyword>
<protein>
    <recommendedName>
        <fullName evidence="1">Large ribosomal subunit protein bL28</fullName>
    </recommendedName>
    <alternativeName>
        <fullName evidence="2">50S ribosomal protein L28</fullName>
    </alternativeName>
</protein>
<evidence type="ECO:0000255" key="1">
    <source>
        <dbReference type="HAMAP-Rule" id="MF_00373"/>
    </source>
</evidence>
<evidence type="ECO:0000305" key="2"/>
<name>RL28_WOLPM</name>
<feature type="chain" id="PRO_0000178590" description="Large ribosomal subunit protein bL28">
    <location>
        <begin position="1"/>
        <end position="104"/>
    </location>
</feature>
<dbReference type="EMBL" id="AE017196">
    <property type="protein sequence ID" value="AAS14117.1"/>
    <property type="molecule type" value="Genomic_DNA"/>
</dbReference>
<dbReference type="RefSeq" id="WP_006279619.1">
    <property type="nucleotide sequence ID" value="NZ_OX384529.1"/>
</dbReference>
<dbReference type="SMR" id="Q73HZ5"/>
<dbReference type="EnsemblBacteria" id="AAS14117">
    <property type="protein sequence ID" value="AAS14117"/>
    <property type="gene ID" value="WD_0391"/>
</dbReference>
<dbReference type="GeneID" id="70035886"/>
<dbReference type="KEGG" id="wol:WD_0391"/>
<dbReference type="eggNOG" id="COG0227">
    <property type="taxonomic scope" value="Bacteria"/>
</dbReference>
<dbReference type="Proteomes" id="UP000008215">
    <property type="component" value="Chromosome"/>
</dbReference>
<dbReference type="GO" id="GO:0022625">
    <property type="term" value="C:cytosolic large ribosomal subunit"/>
    <property type="evidence" value="ECO:0007669"/>
    <property type="project" value="TreeGrafter"/>
</dbReference>
<dbReference type="GO" id="GO:0003735">
    <property type="term" value="F:structural constituent of ribosome"/>
    <property type="evidence" value="ECO:0007669"/>
    <property type="project" value="InterPro"/>
</dbReference>
<dbReference type="GO" id="GO:0006412">
    <property type="term" value="P:translation"/>
    <property type="evidence" value="ECO:0007669"/>
    <property type="project" value="UniProtKB-UniRule"/>
</dbReference>
<dbReference type="Gene3D" id="2.30.170.40">
    <property type="entry name" value="Ribosomal protein L28/L24"/>
    <property type="match status" value="1"/>
</dbReference>
<dbReference type="HAMAP" id="MF_00373">
    <property type="entry name" value="Ribosomal_bL28"/>
    <property type="match status" value="1"/>
</dbReference>
<dbReference type="InterPro" id="IPR026569">
    <property type="entry name" value="Ribosomal_bL28"/>
</dbReference>
<dbReference type="InterPro" id="IPR034704">
    <property type="entry name" value="Ribosomal_bL28/bL31-like_sf"/>
</dbReference>
<dbReference type="InterPro" id="IPR001383">
    <property type="entry name" value="Ribosomal_bL28_bact-type"/>
</dbReference>
<dbReference type="InterPro" id="IPR037147">
    <property type="entry name" value="Ribosomal_bL28_sf"/>
</dbReference>
<dbReference type="NCBIfam" id="TIGR00009">
    <property type="entry name" value="L28"/>
    <property type="match status" value="1"/>
</dbReference>
<dbReference type="PANTHER" id="PTHR13528">
    <property type="entry name" value="39S RIBOSOMAL PROTEIN L28, MITOCHONDRIAL"/>
    <property type="match status" value="1"/>
</dbReference>
<dbReference type="PANTHER" id="PTHR13528:SF2">
    <property type="entry name" value="LARGE RIBOSOMAL SUBUNIT PROTEIN BL28M"/>
    <property type="match status" value="1"/>
</dbReference>
<dbReference type="Pfam" id="PF00830">
    <property type="entry name" value="Ribosomal_L28"/>
    <property type="match status" value="1"/>
</dbReference>
<dbReference type="SUPFAM" id="SSF143800">
    <property type="entry name" value="L28p-like"/>
    <property type="match status" value="1"/>
</dbReference>